<dbReference type="EMBL" id="U86405">
    <property type="protein sequence ID" value="AAC53318.1"/>
    <property type="molecule type" value="mRNA"/>
</dbReference>
<dbReference type="EMBL" id="U60884">
    <property type="protein sequence ID" value="AAC52661.1"/>
    <property type="molecule type" value="mRNA"/>
</dbReference>
<dbReference type="CCDS" id="CCDS29119.1">
    <molecule id="O08539-1"/>
</dbReference>
<dbReference type="RefSeq" id="NP_033798.1">
    <molecule id="O08539-1"/>
    <property type="nucleotide sequence ID" value="NM_009668.2"/>
</dbReference>
<dbReference type="RefSeq" id="XP_006526056.1">
    <molecule id="O08539-2"/>
    <property type="nucleotide sequence ID" value="XM_006525993.4"/>
</dbReference>
<dbReference type="BMRB" id="O08539"/>
<dbReference type="SMR" id="O08539"/>
<dbReference type="BioGRID" id="206025">
    <property type="interactions" value="39"/>
</dbReference>
<dbReference type="ComplexPortal" id="CPX-744">
    <property type="entry name" value="c-MYC-BIN1 complex"/>
</dbReference>
<dbReference type="CORUM" id="O08539"/>
<dbReference type="FunCoup" id="O08539">
    <property type="interactions" value="1637"/>
</dbReference>
<dbReference type="IntAct" id="O08539">
    <property type="interactions" value="16"/>
</dbReference>
<dbReference type="MINT" id="O08539"/>
<dbReference type="STRING" id="10090.ENSMUSP00000025239"/>
<dbReference type="GlyGen" id="O08539">
    <property type="glycosylation" value="3 sites, 1 N-linked glycan (1 site)"/>
</dbReference>
<dbReference type="iPTMnet" id="O08539"/>
<dbReference type="MetOSite" id="O08539"/>
<dbReference type="PhosphoSitePlus" id="O08539"/>
<dbReference type="SwissPalm" id="O08539"/>
<dbReference type="jPOST" id="O08539"/>
<dbReference type="PaxDb" id="10090-ENSMUSP00000025239"/>
<dbReference type="PeptideAtlas" id="O08539"/>
<dbReference type="ProteomicsDB" id="265215">
    <molecule id="O08539-1"/>
</dbReference>
<dbReference type="ProteomicsDB" id="265216">
    <molecule id="O08539-2"/>
</dbReference>
<dbReference type="Pumba" id="O08539"/>
<dbReference type="Antibodypedia" id="1297">
    <property type="antibodies" value="443 antibodies from 41 providers"/>
</dbReference>
<dbReference type="DNASU" id="30948"/>
<dbReference type="Ensembl" id="ENSMUST00000025239.9">
    <molecule id="O08539-1"/>
    <property type="protein sequence ID" value="ENSMUSP00000025239.8"/>
    <property type="gene ID" value="ENSMUSG00000024381.18"/>
</dbReference>
<dbReference type="Ensembl" id="ENSMUST00000234857.2">
    <molecule id="O08539-2"/>
    <property type="protein sequence ID" value="ENSMUSP00000157259.2"/>
    <property type="gene ID" value="ENSMUSG00000024381.18"/>
</dbReference>
<dbReference type="GeneID" id="30948"/>
<dbReference type="KEGG" id="mmu:30948"/>
<dbReference type="UCSC" id="uc008ejh.1">
    <molecule id="O08539-1"/>
    <property type="organism name" value="mouse"/>
</dbReference>
<dbReference type="UCSC" id="uc008ejj.1">
    <molecule id="O08539-2"/>
    <property type="organism name" value="mouse"/>
</dbReference>
<dbReference type="AGR" id="MGI:108092"/>
<dbReference type="CTD" id="274"/>
<dbReference type="MGI" id="MGI:108092">
    <property type="gene designation" value="Bin1"/>
</dbReference>
<dbReference type="VEuPathDB" id="HostDB:ENSMUSG00000024381"/>
<dbReference type="eggNOG" id="KOG3771">
    <property type="taxonomic scope" value="Eukaryota"/>
</dbReference>
<dbReference type="GeneTree" id="ENSGT00950000182882"/>
<dbReference type="HOGENOM" id="CLU_017859_4_0_1"/>
<dbReference type="InParanoid" id="O08539"/>
<dbReference type="OrthoDB" id="446293at2759"/>
<dbReference type="PhylomeDB" id="O08539"/>
<dbReference type="TreeFam" id="TF313542"/>
<dbReference type="Reactome" id="R-MMU-8856828">
    <property type="pathway name" value="Clathrin-mediated endocytosis"/>
</dbReference>
<dbReference type="BioGRID-ORCS" id="30948">
    <property type="hits" value="2 hits in 79 CRISPR screens"/>
</dbReference>
<dbReference type="CD-CODE" id="CE726F99">
    <property type="entry name" value="Postsynaptic density"/>
</dbReference>
<dbReference type="ChiTaRS" id="Bin1">
    <property type="organism name" value="mouse"/>
</dbReference>
<dbReference type="PRO" id="PR:O08539"/>
<dbReference type="Proteomes" id="UP000000589">
    <property type="component" value="Chromosome 18"/>
</dbReference>
<dbReference type="RNAct" id="O08539">
    <property type="molecule type" value="protein"/>
</dbReference>
<dbReference type="Bgee" id="ENSMUSG00000024381">
    <property type="expression patterns" value="Expressed in hindlimb stylopod muscle and 263 other cell types or tissues"/>
</dbReference>
<dbReference type="ExpressionAtlas" id="O08539">
    <property type="expression patterns" value="baseline and differential"/>
</dbReference>
<dbReference type="GO" id="GO:0030424">
    <property type="term" value="C:axon"/>
    <property type="evidence" value="ECO:0000314"/>
    <property type="project" value="ARUK-UCL"/>
</dbReference>
<dbReference type="GO" id="GO:0043194">
    <property type="term" value="C:axon initial segment"/>
    <property type="evidence" value="ECO:0000250"/>
    <property type="project" value="Alzheimers_University_of_Toronto"/>
</dbReference>
<dbReference type="GO" id="GO:0030425">
    <property type="term" value="C:dendrite"/>
    <property type="evidence" value="ECO:0000314"/>
    <property type="project" value="ARUK-UCL"/>
</dbReference>
<dbReference type="GO" id="GO:0005768">
    <property type="term" value="C:endosome"/>
    <property type="evidence" value="ECO:0007669"/>
    <property type="project" value="UniProtKB-SubCell"/>
</dbReference>
<dbReference type="GO" id="GO:0098978">
    <property type="term" value="C:glutamatergic synapse"/>
    <property type="evidence" value="ECO:0000314"/>
    <property type="project" value="SynGO"/>
</dbReference>
<dbReference type="GO" id="GO:0031674">
    <property type="term" value="C:I band"/>
    <property type="evidence" value="ECO:0000250"/>
    <property type="project" value="Alzheimers_University_of_Toronto"/>
</dbReference>
<dbReference type="GO" id="GO:0060987">
    <property type="term" value="C:lipid tube"/>
    <property type="evidence" value="ECO:0000250"/>
    <property type="project" value="Alzheimers_University_of_Toronto"/>
</dbReference>
<dbReference type="GO" id="GO:0005874">
    <property type="term" value="C:microtubule"/>
    <property type="evidence" value="ECO:0000250"/>
    <property type="project" value="Alzheimers_University_of_Toronto"/>
</dbReference>
<dbReference type="GO" id="GO:0033268">
    <property type="term" value="C:node of Ranvier"/>
    <property type="evidence" value="ECO:0000250"/>
    <property type="project" value="Alzheimers_University_of_Toronto"/>
</dbReference>
<dbReference type="GO" id="GO:0005635">
    <property type="term" value="C:nuclear envelope"/>
    <property type="evidence" value="ECO:0000314"/>
    <property type="project" value="WormBase"/>
</dbReference>
<dbReference type="GO" id="GO:0005634">
    <property type="term" value="C:nucleus"/>
    <property type="evidence" value="ECO:0000314"/>
    <property type="project" value="MGI"/>
</dbReference>
<dbReference type="GO" id="GO:0098794">
    <property type="term" value="C:postsynapse"/>
    <property type="evidence" value="ECO:0000314"/>
    <property type="project" value="SynGO"/>
</dbReference>
<dbReference type="GO" id="GO:0098793">
    <property type="term" value="C:presynapse"/>
    <property type="evidence" value="ECO:0000314"/>
    <property type="project" value="SynGO"/>
</dbReference>
<dbReference type="GO" id="GO:0090571">
    <property type="term" value="C:RNA polymerase II transcription repressor complex"/>
    <property type="evidence" value="ECO:0000266"/>
    <property type="project" value="ComplexPortal"/>
</dbReference>
<dbReference type="GO" id="GO:0045202">
    <property type="term" value="C:synapse"/>
    <property type="evidence" value="ECO:0000314"/>
    <property type="project" value="SynGO"/>
</dbReference>
<dbReference type="GO" id="GO:0030315">
    <property type="term" value="C:T-tubule"/>
    <property type="evidence" value="ECO:0000314"/>
    <property type="project" value="ARUK-UCL"/>
</dbReference>
<dbReference type="GO" id="GO:0031982">
    <property type="term" value="C:vesicle"/>
    <property type="evidence" value="ECO:0000314"/>
    <property type="project" value="ARUK-UCL"/>
</dbReference>
<dbReference type="GO" id="GO:0030018">
    <property type="term" value="C:Z disc"/>
    <property type="evidence" value="ECO:0000250"/>
    <property type="project" value="Alzheimers_University_of_Toronto"/>
</dbReference>
<dbReference type="GO" id="GO:0019828">
    <property type="term" value="F:aspartic-type endopeptidase inhibitor activity"/>
    <property type="evidence" value="ECO:0000315"/>
    <property type="project" value="ARUK-UCL"/>
</dbReference>
<dbReference type="GO" id="GO:0035591">
    <property type="term" value="F:signaling adaptor activity"/>
    <property type="evidence" value="ECO:0000314"/>
    <property type="project" value="UniProt"/>
</dbReference>
<dbReference type="GO" id="GO:0048156">
    <property type="term" value="F:tau protein binding"/>
    <property type="evidence" value="ECO:0000353"/>
    <property type="project" value="Alzheimers_University_of_Toronto"/>
</dbReference>
<dbReference type="GO" id="GO:0060988">
    <property type="term" value="P:lipid tube assembly"/>
    <property type="evidence" value="ECO:0000250"/>
    <property type="project" value="Alzheimers_University_of_Toronto"/>
</dbReference>
<dbReference type="GO" id="GO:0042692">
    <property type="term" value="P:muscle cell differentiation"/>
    <property type="evidence" value="ECO:0000315"/>
    <property type="project" value="MGI"/>
</dbReference>
<dbReference type="GO" id="GO:1902430">
    <property type="term" value="P:negative regulation of amyloid-beta formation"/>
    <property type="evidence" value="ECO:0000315"/>
    <property type="project" value="ARUK-UCL"/>
</dbReference>
<dbReference type="GO" id="GO:1904878">
    <property type="term" value="P:negative regulation of calcium ion transmembrane transport via high voltage-gated calcium channel"/>
    <property type="evidence" value="ECO:0000315"/>
    <property type="project" value="ARUK-UCL"/>
</dbReference>
<dbReference type="GO" id="GO:1901380">
    <property type="term" value="P:negative regulation of potassium ion transmembrane transport"/>
    <property type="evidence" value="ECO:0000315"/>
    <property type="project" value="ARUK-UCL"/>
</dbReference>
<dbReference type="GO" id="GO:0000122">
    <property type="term" value="P:negative regulation of transcription by RNA polymerase II"/>
    <property type="evidence" value="ECO:0000266"/>
    <property type="project" value="ComplexPortal"/>
</dbReference>
<dbReference type="GO" id="GO:1903946">
    <property type="term" value="P:negative regulation of ventricular cardiac muscle cell action potential"/>
    <property type="evidence" value="ECO:0000315"/>
    <property type="project" value="ARUK-UCL"/>
</dbReference>
<dbReference type="GO" id="GO:0051647">
    <property type="term" value="P:nucleus localization"/>
    <property type="evidence" value="ECO:0000315"/>
    <property type="project" value="WormBase"/>
</dbReference>
<dbReference type="GO" id="GO:0030838">
    <property type="term" value="P:positive regulation of actin filament polymerization"/>
    <property type="evidence" value="ECO:0000314"/>
    <property type="project" value="ARUK-UCL"/>
</dbReference>
<dbReference type="GO" id="GO:0043065">
    <property type="term" value="P:positive regulation of apoptotic process"/>
    <property type="evidence" value="ECO:0000250"/>
    <property type="project" value="Alzheimers_University_of_Toronto"/>
</dbReference>
<dbReference type="GO" id="GO:0048711">
    <property type="term" value="P:positive regulation of astrocyte differentiation"/>
    <property type="evidence" value="ECO:0000250"/>
    <property type="project" value="Alzheimers_University_of_Toronto"/>
</dbReference>
<dbReference type="GO" id="GO:0010564">
    <property type="term" value="P:regulation of cell cycle process"/>
    <property type="evidence" value="ECO:0000266"/>
    <property type="project" value="ComplexPortal"/>
</dbReference>
<dbReference type="GO" id="GO:0030100">
    <property type="term" value="P:regulation of endocytosis"/>
    <property type="evidence" value="ECO:0007669"/>
    <property type="project" value="InterPro"/>
</dbReference>
<dbReference type="GO" id="GO:0086091">
    <property type="term" value="P:regulation of heart rate by cardiac conduction"/>
    <property type="evidence" value="ECO:0000315"/>
    <property type="project" value="ARUK-UCL"/>
</dbReference>
<dbReference type="GO" id="GO:0045664">
    <property type="term" value="P:regulation of neuron differentiation"/>
    <property type="evidence" value="ECO:0000250"/>
    <property type="project" value="Alzheimers_University_of_Toronto"/>
</dbReference>
<dbReference type="GO" id="GO:0032496">
    <property type="term" value="P:response to lipopolysaccharide"/>
    <property type="evidence" value="ECO:0000314"/>
    <property type="project" value="UniProt"/>
</dbReference>
<dbReference type="GO" id="GO:0048488">
    <property type="term" value="P:synaptic vesicle endocytosis"/>
    <property type="evidence" value="ECO:0000314"/>
    <property type="project" value="SynGO"/>
</dbReference>
<dbReference type="GO" id="GO:0033292">
    <property type="term" value="P:T-tubule organization"/>
    <property type="evidence" value="ECO:0000315"/>
    <property type="project" value="ARUK-UCL"/>
</dbReference>
<dbReference type="CDD" id="cd07611">
    <property type="entry name" value="BAR_Amphiphysin_I_II"/>
    <property type="match status" value="1"/>
</dbReference>
<dbReference type="CDD" id="cd12139">
    <property type="entry name" value="SH3_Bin1"/>
    <property type="match status" value="1"/>
</dbReference>
<dbReference type="FunFam" id="1.20.1270.60:FF:000013">
    <property type="entry name" value="Amphiphysin isoform 2"/>
    <property type="match status" value="1"/>
</dbReference>
<dbReference type="FunFam" id="2.30.30.40:FF:000029">
    <property type="entry name" value="myc box-dependent-interacting protein 1 isoform X2"/>
    <property type="match status" value="1"/>
</dbReference>
<dbReference type="Gene3D" id="1.20.1270.60">
    <property type="entry name" value="Arfaptin homology (AH) domain/BAR domain"/>
    <property type="match status" value="1"/>
</dbReference>
<dbReference type="Gene3D" id="2.30.30.40">
    <property type="entry name" value="SH3 Domains"/>
    <property type="match status" value="1"/>
</dbReference>
<dbReference type="InterPro" id="IPR027267">
    <property type="entry name" value="AH/BAR_dom_sf"/>
</dbReference>
<dbReference type="InterPro" id="IPR003005">
    <property type="entry name" value="Amphiphysin"/>
</dbReference>
<dbReference type="InterPro" id="IPR035471">
    <property type="entry name" value="Amphiphysin-2_SH3"/>
</dbReference>
<dbReference type="InterPro" id="IPR003023">
    <property type="entry name" value="Amphiphysin_2"/>
</dbReference>
<dbReference type="InterPro" id="IPR004148">
    <property type="entry name" value="BAR_dom"/>
</dbReference>
<dbReference type="InterPro" id="IPR036028">
    <property type="entry name" value="SH3-like_dom_sf"/>
</dbReference>
<dbReference type="InterPro" id="IPR001452">
    <property type="entry name" value="SH3_domain"/>
</dbReference>
<dbReference type="PANTHER" id="PTHR46514">
    <property type="entry name" value="AMPHIPHYSIN"/>
    <property type="match status" value="1"/>
</dbReference>
<dbReference type="PANTHER" id="PTHR46514:SF4">
    <property type="entry name" value="MYC BOX-DEPENDENT-INTERACTING PROTEIN 1"/>
    <property type="match status" value="1"/>
</dbReference>
<dbReference type="Pfam" id="PF03114">
    <property type="entry name" value="BAR"/>
    <property type="match status" value="1"/>
</dbReference>
<dbReference type="Pfam" id="PF14604">
    <property type="entry name" value="SH3_9"/>
    <property type="match status" value="1"/>
</dbReference>
<dbReference type="PRINTS" id="PR01251">
    <property type="entry name" value="AMPHIPHYSIN"/>
</dbReference>
<dbReference type="PRINTS" id="PR01253">
    <property type="entry name" value="AMPHIPHYSIN2"/>
</dbReference>
<dbReference type="PRINTS" id="PR00452">
    <property type="entry name" value="SH3DOMAIN"/>
</dbReference>
<dbReference type="SMART" id="SM00721">
    <property type="entry name" value="BAR"/>
    <property type="match status" value="1"/>
</dbReference>
<dbReference type="SMART" id="SM00326">
    <property type="entry name" value="SH3"/>
    <property type="match status" value="1"/>
</dbReference>
<dbReference type="SUPFAM" id="SSF103657">
    <property type="entry name" value="BAR/IMD domain-like"/>
    <property type="match status" value="1"/>
</dbReference>
<dbReference type="SUPFAM" id="SSF50044">
    <property type="entry name" value="SH3-domain"/>
    <property type="match status" value="1"/>
</dbReference>
<dbReference type="PROSITE" id="PS51021">
    <property type="entry name" value="BAR"/>
    <property type="match status" value="1"/>
</dbReference>
<dbReference type="PROSITE" id="PS50002">
    <property type="entry name" value="SH3"/>
    <property type="match status" value="1"/>
</dbReference>
<comment type="function">
    <text evidence="2 3 8 10 11">Is a key player in the control of plasma membrane curvature, and membrane shaping and remodeling. Required in muscle cells for the formation of T-tubules, tubular invaginations of the plasma membrane that function in depolarization-contraction coupling. Required in muscle cells for the formation of T-tubules, tubular invaginations of the plasma membrane that function in depolarization-contraction coupling (PubMed:12183633). Is a negative regulator of endocytosis (By similarity). Is also involved in the regulation of intracellular vesicles sorting, modulation of BACE1 trafficking and the control of amyloid-beta production (PubMed:12668730, PubMed:27179792). In neuronal circuits, endocytosis regulation may influence the internalization of PHF-tau aggregates (By similarity). May be involved in the regulation of MYC activity and the control cell proliferation (By similarity).</text>
</comment>
<comment type="subunit">
    <text evidence="2 3 9 10 12">Heterodimer with AMPH (By similarity). Binds SH3GLB1 (PubMed:12456676). Interacts (via SH3 domain) with DNM1. Interacts with SYNJ1 (By similarity). Interacts (via SH3 domain) with DNM2. Interacts with CLTC (By similarity). Interacts with AP2A2. Interacts with AP2B1 (By similarity). Interacts with MYC (via N-terminal transactivation domain); the interaction requires the integrity of the conserved MYC box regions 1 and 2 (PubMed:8782822). Interacts with BIN2 (By similarity). Interacts with SNX4 (PubMed:12668730). Interacts (via BAR domain) with BACE1 (By similarity). Binds (via BAR domain) F-actin (By similarity).</text>
</comment>
<comment type="interaction">
    <interactant intactId="EBI-775152">
        <id>O08539</id>
    </interactant>
    <interactant intactId="EBI-774043">
        <id>P10637</id>
        <label>Mapt</label>
    </interactant>
    <organismsDiffer>false</organismsDiffer>
    <experiments>2</experiments>
</comment>
<comment type="interaction">
    <interactant intactId="EBI-775152">
        <id>O08539</id>
    </interactant>
    <interactant intactId="EBI-6861578">
        <id>Q9Z2C5</id>
        <label>Mtm1</label>
    </interactant>
    <organismsDiffer>false</organismsDiffer>
    <experiments>3</experiments>
</comment>
<comment type="subcellular location">
    <subcellularLocation>
        <location evidence="2">Nucleus</location>
    </subcellularLocation>
    <subcellularLocation>
        <location evidence="10">Cytoplasm</location>
    </subcellularLocation>
    <subcellularLocation>
        <location evidence="10">Endosome</location>
    </subcellularLocation>
    <subcellularLocation>
        <location evidence="3">Cell membrane</location>
        <location evidence="3">Sarcolemma</location>
        <location evidence="3">T-tubule</location>
    </subcellularLocation>
</comment>
<comment type="alternative products">
    <event type="alternative splicing"/>
    <isoform>
        <id>O08539-1</id>
        <name>1</name>
        <name>BRAMP2</name>
        <sequence type="displayed"/>
    </isoform>
    <isoform>
        <id>O08539-2</id>
        <name>2</name>
        <name>SH3P9</name>
        <sequence type="described" ref="VSP_000254 VSP_000255"/>
    </isoform>
</comment>
<comment type="tissue specificity">
    <text evidence="13">Isoform 1 is expressed mainly in the brain. Isoform 2 is widely expressed.</text>
</comment>
<comment type="PTM">
    <text evidence="1">Phosphorylated by protein kinase C.</text>
</comment>
<gene>
    <name type="primary">Bin1</name>
    <name type="synonym">Amphl</name>
    <name type="synonym">Sh3p9</name>
</gene>
<reference key="1">
    <citation type="journal article" date="1997" name="J. Biol. Chem.">
        <title>A new member of the amphiphysin family connecting endocytosis and signal transduction pathways.</title>
        <authorList>
            <person name="Leprince C."/>
            <person name="Romero F."/>
            <person name="Cussac D."/>
            <person name="Vayssiere B."/>
            <person name="Berger R."/>
            <person name="Tavitian A."/>
            <person name="Camonis J.H."/>
        </authorList>
    </citation>
    <scope>NUCLEOTIDE SEQUENCE [MRNA] (ISOFORM 1)</scope>
    <scope>TISSUE SPECIFICITY</scope>
    <source>
        <strain>BALB/cJ</strain>
        <tissue>Brain</tissue>
    </source>
</reference>
<reference key="2">
    <citation type="journal article" date="1996" name="Nat. Biotechnol.">
        <title>Cloning of ligand targets: systematic isolation of SH3 domain-containing proteins.</title>
        <authorList>
            <person name="Sparks A.B."/>
            <person name="Hoffman N.G."/>
            <person name="McConnell S.J."/>
            <person name="Fowlkes D.M."/>
            <person name="Kay B.K."/>
        </authorList>
    </citation>
    <scope>NUCLEOTIDE SEQUENCE [MRNA] (ISOFORM 2)</scope>
    <source>
        <tissue>Embryo</tissue>
    </source>
</reference>
<reference key="3">
    <citation type="journal article" date="1996" name="Nat. Genet.">
        <title>BIN1 is a novel Myc-interacting protein with features of a tumour suppressor.</title>
        <authorList>
            <person name="Sakamuro D."/>
            <person name="Elliott K.J."/>
            <person name="Wechsler-Reya R."/>
            <person name="Prendergast G.C."/>
        </authorList>
    </citation>
    <scope>INTERACTION WITH MYC</scope>
    <source>
        <tissue>Skeletal muscle</tissue>
    </source>
</reference>
<reference key="4">
    <citation type="journal article" date="2002" name="Science">
        <title>Amphiphysin 2 (Bin1) and T-tubule biogenesis in muscle.</title>
        <authorList>
            <person name="Lee E."/>
            <person name="Marcucci M."/>
            <person name="Daniell L."/>
            <person name="Pypaert M."/>
            <person name="Weisz O.A."/>
            <person name="Ochoa G.C."/>
            <person name="Farsad K."/>
            <person name="Wenk M.R."/>
            <person name="De Camilli P."/>
        </authorList>
    </citation>
    <scope>FUNCTION</scope>
</reference>
<reference key="5">
    <citation type="journal article" date="2003" name="J. Biol. Chem.">
        <title>Characterization of endophilin B1b, a brain-specific membrane-associated lysophosphatidic acid acyl transferase with properties distinct from endophilin A1.</title>
        <authorList>
            <person name="Modregger J."/>
            <person name="Schmidt A.A."/>
            <person name="Ritter B."/>
            <person name="Huttner W.B."/>
            <person name="Plomann M."/>
        </authorList>
    </citation>
    <scope>INTERACTION WITH SH3GLB1</scope>
</reference>
<reference key="6">
    <citation type="journal article" date="2003" name="J. Cell Sci.">
        <title>Sorting nexin 4 and amphiphysin 2, a new partnership between endocytosis and intracellular trafficking.</title>
        <authorList>
            <person name="Leprince C."/>
            <person name="Le Scolan E."/>
            <person name="Meunier B."/>
            <person name="Fraisier V."/>
            <person name="Brandon N."/>
            <person name="De Gunzburg J."/>
            <person name="Camonis J."/>
        </authorList>
    </citation>
    <scope>INTERACTION WITH SNX4</scope>
    <scope>SUBCELLULAR LOCATION</scope>
    <scope>FUNCTION</scope>
</reference>
<reference key="7">
    <citation type="journal article" date="2004" name="Mol. Cell. Proteomics">
        <title>Phosphoproteomic analysis of the developing mouse brain.</title>
        <authorList>
            <person name="Ballif B.A."/>
            <person name="Villen J."/>
            <person name="Beausoleil S.A."/>
            <person name="Schwartz D."/>
            <person name="Gygi S.P."/>
        </authorList>
    </citation>
    <scope>PHOSPHORYLATION [LARGE SCALE ANALYSIS] AT SER-304</scope>
    <scope>IDENTIFICATION BY MASS SPECTROMETRY [LARGE SCALE ANALYSIS]</scope>
    <source>
        <tissue>Embryonic brain</tissue>
    </source>
</reference>
<reference key="8">
    <citation type="journal article" date="2006" name="Mol. Cell. Proteomics">
        <title>Comprehensive identification of phosphorylation sites in postsynaptic density preparations.</title>
        <authorList>
            <person name="Trinidad J.C."/>
            <person name="Specht C.G."/>
            <person name="Thalhammer A."/>
            <person name="Schoepfer R."/>
            <person name="Burlingame A.L."/>
        </authorList>
    </citation>
    <scope>IDENTIFICATION BY MASS SPECTROMETRY [LARGE SCALE ANALYSIS]</scope>
    <source>
        <tissue>Brain</tissue>
    </source>
</reference>
<reference key="9">
    <citation type="journal article" date="2007" name="Mol. Cell. Proteomics">
        <title>Qualitative and quantitative analyses of protein phosphorylation in naive and stimulated mouse synaptosomal preparations.</title>
        <authorList>
            <person name="Munton R.P."/>
            <person name="Tweedie-Cullen R."/>
            <person name="Livingstone-Zatchej M."/>
            <person name="Weinandy F."/>
            <person name="Waidelich M."/>
            <person name="Longo D."/>
            <person name="Gehrig P."/>
            <person name="Potthast F."/>
            <person name="Rutishauser D."/>
            <person name="Gerrits B."/>
            <person name="Panse C."/>
            <person name="Schlapbach R."/>
            <person name="Mansuy I.M."/>
        </authorList>
    </citation>
    <scope>IDENTIFICATION BY MASS SPECTROMETRY [LARGE SCALE ANALYSIS]</scope>
    <source>
        <tissue>Brain cortex</tissue>
    </source>
</reference>
<reference key="10">
    <citation type="journal article" date="2007" name="Proc. Natl. Acad. Sci. U.S.A.">
        <title>Large-scale phosphorylation analysis of mouse liver.</title>
        <authorList>
            <person name="Villen J."/>
            <person name="Beausoleil S.A."/>
            <person name="Gerber S.A."/>
            <person name="Gygi S.P."/>
        </authorList>
    </citation>
    <scope>PHOSPHORYLATION [LARGE SCALE ANALYSIS] AT SER-296; SER-298; SER-304 AND THR-308</scope>
    <scope>IDENTIFICATION BY MASS SPECTROMETRY [LARGE SCALE ANALYSIS]</scope>
    <source>
        <tissue>Liver</tissue>
    </source>
</reference>
<reference key="11">
    <citation type="journal article" date="2009" name="Mol. Cell. Proteomics">
        <title>Large scale localization of protein phosphorylation by use of electron capture dissociation mass spectrometry.</title>
        <authorList>
            <person name="Sweet S.M."/>
            <person name="Bailey C.M."/>
            <person name="Cunningham D.L."/>
            <person name="Heath J.K."/>
            <person name="Cooper H.J."/>
        </authorList>
    </citation>
    <scope>PHOSPHORYLATION [LARGE SCALE ANALYSIS] AT SER-332</scope>
    <scope>IDENTIFICATION BY MASS SPECTROMETRY [LARGE SCALE ANALYSIS]</scope>
    <source>
        <tissue>Embryonic fibroblast</tissue>
    </source>
</reference>
<reference key="12">
    <citation type="journal article" date="2010" name="Cell">
        <title>A tissue-specific atlas of mouse protein phosphorylation and expression.</title>
        <authorList>
            <person name="Huttlin E.L."/>
            <person name="Jedrychowski M.P."/>
            <person name="Elias J.E."/>
            <person name="Goswami T."/>
            <person name="Rad R."/>
            <person name="Beausoleil S.A."/>
            <person name="Villen J."/>
            <person name="Haas W."/>
            <person name="Sowa M.E."/>
            <person name="Gygi S.P."/>
        </authorList>
    </citation>
    <scope>PHOSPHORYLATION [LARGE SCALE ANALYSIS] AT SER-296; SER-298; SER-304; THR-308 AND SER-324</scope>
    <scope>IDENTIFICATION BY MASS SPECTROMETRY [LARGE SCALE ANALYSIS]</scope>
    <source>
        <tissue>Brain</tissue>
        <tissue>Brown adipose tissue</tissue>
        <tissue>Heart</tissue>
        <tissue>Kidney</tissue>
        <tissue>Liver</tissue>
        <tissue>Lung</tissue>
        <tissue>Pancreas</tissue>
        <tissue>Spleen</tissue>
        <tissue>Testis</tissue>
    </source>
</reference>
<reference key="13">
    <citation type="journal article" date="2016" name="Hum. Mol. Genet.">
        <title>BIN1 regulates BACE1 intracellular trafficking and amyloid-beta production.</title>
        <authorList>
            <person name="Miyagawa T."/>
            <person name="Ebinuma I."/>
            <person name="Morohashi Y."/>
            <person name="Hori Y."/>
            <person name="Young Chang M."/>
            <person name="Hattori H."/>
            <person name="Maehara T."/>
            <person name="Yokoshima S."/>
            <person name="Fukuyama T."/>
            <person name="Tsuji S."/>
            <person name="Iwatsubo T."/>
            <person name="Prendergast G.C."/>
            <person name="Tomita T."/>
        </authorList>
    </citation>
    <scope>FUNCTION</scope>
</reference>
<accession>O08539</accession>
<accession>Q62434</accession>
<protein>
    <recommendedName>
        <fullName>Myc box-dependent-interacting protein 1</fullName>
    </recommendedName>
    <alternativeName>
        <fullName>Amphiphysin II</fullName>
    </alternativeName>
    <alternativeName>
        <fullName>Amphiphysin-like protein</fullName>
    </alternativeName>
    <alternativeName>
        <fullName>Bridging integrator 1</fullName>
    </alternativeName>
    <alternativeName>
        <fullName>SH3 domain-containing protein 9</fullName>
    </alternativeName>
</protein>
<name>BIN1_MOUSE</name>
<evidence type="ECO:0000250" key="1"/>
<evidence type="ECO:0000250" key="2">
    <source>
        <dbReference type="UniProtKB" id="O00499"/>
    </source>
</evidence>
<evidence type="ECO:0000250" key="3">
    <source>
        <dbReference type="UniProtKB" id="O08839"/>
    </source>
</evidence>
<evidence type="ECO:0000255" key="4"/>
<evidence type="ECO:0000255" key="5">
    <source>
        <dbReference type="PROSITE-ProRule" id="PRU00192"/>
    </source>
</evidence>
<evidence type="ECO:0000255" key="6">
    <source>
        <dbReference type="PROSITE-ProRule" id="PRU00361"/>
    </source>
</evidence>
<evidence type="ECO:0000256" key="7">
    <source>
        <dbReference type="SAM" id="MobiDB-lite"/>
    </source>
</evidence>
<evidence type="ECO:0000269" key="8">
    <source>
    </source>
</evidence>
<evidence type="ECO:0000269" key="9">
    <source>
    </source>
</evidence>
<evidence type="ECO:0000269" key="10">
    <source>
    </source>
</evidence>
<evidence type="ECO:0000269" key="11">
    <source>
    </source>
</evidence>
<evidence type="ECO:0000269" key="12">
    <source>
    </source>
</evidence>
<evidence type="ECO:0000269" key="13">
    <source>
    </source>
</evidence>
<evidence type="ECO:0000303" key="14">
    <source>
    </source>
</evidence>
<evidence type="ECO:0007744" key="15">
    <source>
    </source>
</evidence>
<evidence type="ECO:0007744" key="16">
    <source>
    </source>
</evidence>
<evidence type="ECO:0007744" key="17">
    <source>
    </source>
</evidence>
<evidence type="ECO:0007744" key="18">
    <source>
    </source>
</evidence>
<sequence>MAEMGSKGVTAGKIASNVQKKLTRAQEKVLQKLGKADETKDEQFEQCVQNFNKQLTEGTRLQKDLRTYLASVKAMHEASKKLSECLQEVYEPEWPGRDEANKIAENNDLLWMDYHQKLVDQALLTMDTYLGQFPDIKSRIAKRGRKLVDYDSARHHYESLQTAKKKDEAKIAKPVSLLEKAAPQWCQGKLQAHLVAQTNLLRNQAEEELIKAQKVFEEMNVDLQEELPSLWNSRVGFYVNTFQSIAGLEENFHKEMSKLNQNLNDVLVSLEKQHGSNTFTVKAQPSDNAPEKGNKSPSPPPDGSPAATPEIRVNHEPEPASGASPGATIPKSPSQLRKGPPVPPPPKHTPSKEMKQEQILSLFDDAFVPEISVTTPSQFEAPGPFSEQASLLDLDFEPLPPVASPVKAPTPSGQSIPWDLWEPTESQAGILPSGEPSSAEGSFAVAWPSQTAEPGPAQPAEASEVVGGAQEPGETAASEATSSSLPAVVVETFSATVNGAVEGSAGTGRLDLPPGFMFKVQAQHDYTATDTDELQLKAGDVVLVIPFQNPEEQDEGWLMGVKESDWNQHKELEKCRGVFPENFTERVQ</sequence>
<feature type="initiator methionine" description="Removed" evidence="2">
    <location>
        <position position="1"/>
    </location>
</feature>
<feature type="chain" id="PRO_0000192952" description="Myc box-dependent-interacting protein 1">
    <location>
        <begin position="2"/>
        <end position="588"/>
    </location>
</feature>
<feature type="domain" description="BAR" evidence="6">
    <location>
        <begin position="29"/>
        <end position="276"/>
    </location>
</feature>
<feature type="domain" description="SH3" evidence="5">
    <location>
        <begin position="515"/>
        <end position="588"/>
    </location>
</feature>
<feature type="region of interest" description="Interaction with BIN2" evidence="1">
    <location>
        <begin position="2"/>
        <end position="122"/>
    </location>
</feature>
<feature type="region of interest" description="Disordered" evidence="7">
    <location>
        <begin position="279"/>
        <end position="355"/>
    </location>
</feature>
<feature type="region of interest" description="Clathrin-binding" evidence="1">
    <location>
        <begin position="379"/>
        <end position="422"/>
    </location>
</feature>
<feature type="region of interest" description="Disordered" evidence="7">
    <location>
        <begin position="448"/>
        <end position="484"/>
    </location>
</feature>
<feature type="coiled-coil region" evidence="4">
    <location>
        <begin position="15"/>
        <end position="42"/>
    </location>
</feature>
<feature type="coiled-coil region" evidence="4">
    <location>
        <begin position="193"/>
        <end position="274"/>
    </location>
</feature>
<feature type="compositionally biased region" description="Low complexity" evidence="7">
    <location>
        <begin position="474"/>
        <end position="484"/>
    </location>
</feature>
<feature type="modified residue" description="N-acetylalanine" evidence="2">
    <location>
        <position position="2"/>
    </location>
</feature>
<feature type="modified residue" description="Phosphoserine" evidence="16 18">
    <location>
        <position position="296"/>
    </location>
</feature>
<feature type="modified residue" description="Phosphoserine" evidence="16 18">
    <location>
        <position position="298"/>
    </location>
</feature>
<feature type="modified residue" description="Phosphoserine" evidence="15 16 18">
    <location>
        <position position="304"/>
    </location>
</feature>
<feature type="modified residue" description="Phosphothreonine" evidence="16 18">
    <location>
        <position position="308"/>
    </location>
</feature>
<feature type="modified residue" description="Phosphoserine" evidence="18">
    <location>
        <position position="324"/>
    </location>
</feature>
<feature type="modified residue" description="Phosphoserine" evidence="17">
    <location>
        <position position="332"/>
    </location>
</feature>
<feature type="splice variant" id="VSP_000254" description="In isoform 2." evidence="14">
    <location>
        <begin position="174"/>
        <end position="204"/>
    </location>
</feature>
<feature type="splice variant" id="VSP_000255" description="In isoform 2." evidence="14">
    <location>
        <begin position="335"/>
        <end position="457"/>
    </location>
</feature>
<proteinExistence type="evidence at protein level"/>
<organism>
    <name type="scientific">Mus musculus</name>
    <name type="common">Mouse</name>
    <dbReference type="NCBI Taxonomy" id="10090"/>
    <lineage>
        <taxon>Eukaryota</taxon>
        <taxon>Metazoa</taxon>
        <taxon>Chordata</taxon>
        <taxon>Craniata</taxon>
        <taxon>Vertebrata</taxon>
        <taxon>Euteleostomi</taxon>
        <taxon>Mammalia</taxon>
        <taxon>Eutheria</taxon>
        <taxon>Euarchontoglires</taxon>
        <taxon>Glires</taxon>
        <taxon>Rodentia</taxon>
        <taxon>Myomorpha</taxon>
        <taxon>Muroidea</taxon>
        <taxon>Muridae</taxon>
        <taxon>Murinae</taxon>
        <taxon>Mus</taxon>
        <taxon>Mus</taxon>
    </lineage>
</organism>
<keyword id="KW-0007">Acetylation</keyword>
<keyword id="KW-0025">Alternative splicing</keyword>
<keyword id="KW-1003">Cell membrane</keyword>
<keyword id="KW-0175">Coiled coil</keyword>
<keyword id="KW-0963">Cytoplasm</keyword>
<keyword id="KW-0217">Developmental protein</keyword>
<keyword id="KW-0221">Differentiation</keyword>
<keyword id="KW-0254">Endocytosis</keyword>
<keyword id="KW-0967">Endosome</keyword>
<keyword id="KW-0472">Membrane</keyword>
<keyword id="KW-0539">Nucleus</keyword>
<keyword id="KW-0597">Phosphoprotein</keyword>
<keyword id="KW-1185">Reference proteome</keyword>
<keyword id="KW-0728">SH3 domain</keyword>